<evidence type="ECO:0000255" key="1">
    <source>
        <dbReference type="HAMAP-Rule" id="MF_01569"/>
    </source>
</evidence>
<reference key="1">
    <citation type="journal article" date="2009" name="J. Bacteriol.">
        <title>Role of conjugative elements in the evolution of the multidrug-resistant pandemic clone Streptococcus pneumoniae Spain23F ST81.</title>
        <authorList>
            <person name="Croucher N.J."/>
            <person name="Walker D."/>
            <person name="Romero P."/>
            <person name="Lennard N."/>
            <person name="Paterson G.K."/>
            <person name="Bason N.C."/>
            <person name="Mitchell A.M."/>
            <person name="Quail M.A."/>
            <person name="Andrew P.W."/>
            <person name="Parkhill J."/>
            <person name="Bentley S.D."/>
            <person name="Mitchell T.J."/>
        </authorList>
    </citation>
    <scope>NUCLEOTIDE SEQUENCE [LARGE SCALE GENOMIC DNA]</scope>
    <source>
        <strain>ATCC 700669 / Spain 23F-1</strain>
    </source>
</reference>
<dbReference type="EC" id="6.1.1.15" evidence="1"/>
<dbReference type="EMBL" id="FM211187">
    <property type="protein sequence ID" value="CAR68112.1"/>
    <property type="molecule type" value="Genomic_DNA"/>
</dbReference>
<dbReference type="RefSeq" id="WP_000814080.1">
    <property type="nucleotide sequence ID" value="NC_011900.1"/>
</dbReference>
<dbReference type="SMR" id="B8ZKT3"/>
<dbReference type="KEGG" id="sne:SPN23F02520"/>
<dbReference type="HOGENOM" id="CLU_016739_0_0_9"/>
<dbReference type="GO" id="GO:0005829">
    <property type="term" value="C:cytosol"/>
    <property type="evidence" value="ECO:0007669"/>
    <property type="project" value="TreeGrafter"/>
</dbReference>
<dbReference type="GO" id="GO:0002161">
    <property type="term" value="F:aminoacyl-tRNA deacylase activity"/>
    <property type="evidence" value="ECO:0007669"/>
    <property type="project" value="InterPro"/>
</dbReference>
<dbReference type="GO" id="GO:0005524">
    <property type="term" value="F:ATP binding"/>
    <property type="evidence" value="ECO:0007669"/>
    <property type="project" value="UniProtKB-UniRule"/>
</dbReference>
<dbReference type="GO" id="GO:0140096">
    <property type="term" value="F:catalytic activity, acting on a protein"/>
    <property type="evidence" value="ECO:0007669"/>
    <property type="project" value="UniProtKB-ARBA"/>
</dbReference>
<dbReference type="GO" id="GO:0004827">
    <property type="term" value="F:proline-tRNA ligase activity"/>
    <property type="evidence" value="ECO:0007669"/>
    <property type="project" value="UniProtKB-UniRule"/>
</dbReference>
<dbReference type="GO" id="GO:0016740">
    <property type="term" value="F:transferase activity"/>
    <property type="evidence" value="ECO:0007669"/>
    <property type="project" value="UniProtKB-ARBA"/>
</dbReference>
<dbReference type="GO" id="GO:0006433">
    <property type="term" value="P:prolyl-tRNA aminoacylation"/>
    <property type="evidence" value="ECO:0007669"/>
    <property type="project" value="UniProtKB-UniRule"/>
</dbReference>
<dbReference type="CDD" id="cd04334">
    <property type="entry name" value="ProRS-INS"/>
    <property type="match status" value="1"/>
</dbReference>
<dbReference type="CDD" id="cd00861">
    <property type="entry name" value="ProRS_anticodon_short"/>
    <property type="match status" value="1"/>
</dbReference>
<dbReference type="CDD" id="cd00779">
    <property type="entry name" value="ProRS_core_prok"/>
    <property type="match status" value="1"/>
</dbReference>
<dbReference type="FunFam" id="3.30.930.10:FF:000062">
    <property type="entry name" value="Proline--tRNA ligase"/>
    <property type="match status" value="1"/>
</dbReference>
<dbReference type="FunFam" id="3.30.930.10:FF:000070">
    <property type="entry name" value="Proline--tRNA ligase"/>
    <property type="match status" value="1"/>
</dbReference>
<dbReference type="FunFam" id="3.40.50.800:FF:000011">
    <property type="entry name" value="Proline--tRNA ligase"/>
    <property type="match status" value="1"/>
</dbReference>
<dbReference type="FunFam" id="3.90.960.10:FF:000004">
    <property type="entry name" value="Proline--tRNA ligase"/>
    <property type="match status" value="1"/>
</dbReference>
<dbReference type="Gene3D" id="3.40.50.800">
    <property type="entry name" value="Anticodon-binding domain"/>
    <property type="match status" value="1"/>
</dbReference>
<dbReference type="Gene3D" id="3.30.930.10">
    <property type="entry name" value="Bira Bifunctional Protein, Domain 2"/>
    <property type="match status" value="2"/>
</dbReference>
<dbReference type="Gene3D" id="3.90.960.10">
    <property type="entry name" value="YbaK/aminoacyl-tRNA synthetase-associated domain"/>
    <property type="match status" value="1"/>
</dbReference>
<dbReference type="HAMAP" id="MF_01569">
    <property type="entry name" value="Pro_tRNA_synth_type1"/>
    <property type="match status" value="1"/>
</dbReference>
<dbReference type="InterPro" id="IPR002314">
    <property type="entry name" value="aa-tRNA-synt_IIb"/>
</dbReference>
<dbReference type="InterPro" id="IPR006195">
    <property type="entry name" value="aa-tRNA-synth_II"/>
</dbReference>
<dbReference type="InterPro" id="IPR045864">
    <property type="entry name" value="aa-tRNA-synth_II/BPL/LPL"/>
</dbReference>
<dbReference type="InterPro" id="IPR004154">
    <property type="entry name" value="Anticodon-bd"/>
</dbReference>
<dbReference type="InterPro" id="IPR036621">
    <property type="entry name" value="Anticodon-bd_dom_sf"/>
</dbReference>
<dbReference type="InterPro" id="IPR002316">
    <property type="entry name" value="Pro-tRNA-ligase_IIa"/>
</dbReference>
<dbReference type="InterPro" id="IPR004500">
    <property type="entry name" value="Pro-tRNA-synth_IIa_bac-type"/>
</dbReference>
<dbReference type="InterPro" id="IPR023717">
    <property type="entry name" value="Pro-tRNA-Synthase_IIa_type1"/>
</dbReference>
<dbReference type="InterPro" id="IPR050062">
    <property type="entry name" value="Pro-tRNA_synthetase"/>
</dbReference>
<dbReference type="InterPro" id="IPR044140">
    <property type="entry name" value="ProRS_anticodon_short"/>
</dbReference>
<dbReference type="InterPro" id="IPR033730">
    <property type="entry name" value="ProRS_core_prok"/>
</dbReference>
<dbReference type="InterPro" id="IPR036754">
    <property type="entry name" value="YbaK/aa-tRNA-synt-asso_dom_sf"/>
</dbReference>
<dbReference type="InterPro" id="IPR007214">
    <property type="entry name" value="YbaK/aa-tRNA-synth-assoc-dom"/>
</dbReference>
<dbReference type="NCBIfam" id="NF006625">
    <property type="entry name" value="PRK09194.1"/>
    <property type="match status" value="1"/>
</dbReference>
<dbReference type="NCBIfam" id="TIGR00409">
    <property type="entry name" value="proS_fam_II"/>
    <property type="match status" value="2"/>
</dbReference>
<dbReference type="PANTHER" id="PTHR42753">
    <property type="entry name" value="MITOCHONDRIAL RIBOSOME PROTEIN L39/PROLYL-TRNA LIGASE FAMILY MEMBER"/>
    <property type="match status" value="1"/>
</dbReference>
<dbReference type="PANTHER" id="PTHR42753:SF2">
    <property type="entry name" value="PROLINE--TRNA LIGASE"/>
    <property type="match status" value="1"/>
</dbReference>
<dbReference type="Pfam" id="PF03129">
    <property type="entry name" value="HGTP_anticodon"/>
    <property type="match status" value="1"/>
</dbReference>
<dbReference type="Pfam" id="PF00587">
    <property type="entry name" value="tRNA-synt_2b"/>
    <property type="match status" value="1"/>
</dbReference>
<dbReference type="Pfam" id="PF04073">
    <property type="entry name" value="tRNA_edit"/>
    <property type="match status" value="1"/>
</dbReference>
<dbReference type="PRINTS" id="PR01046">
    <property type="entry name" value="TRNASYNTHPRO"/>
</dbReference>
<dbReference type="SUPFAM" id="SSF52954">
    <property type="entry name" value="Class II aaRS ABD-related"/>
    <property type="match status" value="1"/>
</dbReference>
<dbReference type="SUPFAM" id="SSF55681">
    <property type="entry name" value="Class II aaRS and biotin synthetases"/>
    <property type="match status" value="1"/>
</dbReference>
<dbReference type="SUPFAM" id="SSF55826">
    <property type="entry name" value="YbaK/ProRS associated domain"/>
    <property type="match status" value="1"/>
</dbReference>
<dbReference type="PROSITE" id="PS50862">
    <property type="entry name" value="AA_TRNA_LIGASE_II"/>
    <property type="match status" value="1"/>
</dbReference>
<sequence>MKQSKMPIPTLREMPSDAQVISHALMLRAGYVRQVSAGVYSYLPLANRVIEKAKNIMRQEFEKIGAVEMLAPTLLSAELWRESGRYETYGEDLYKLKNREKSDFILGPTHEETFTAIVRDSVKSYKQLPLNLYQIQPKYRDEKRPRNGLLRTREFIMKDAYSFHANYDSLDSVYDEYKAAYERIFTRSGLDFKAIIGDGGAMGGKDSQEFMAITSARTDLDRWVVLDKSVASFDEIPAEVQEEIKAELLKWIVSGEDTIAYSSESSYAANLEMATNEYKPSNRVVAEEEVTRVATPDVKSIDEVAAFLNVPEEQTIKTLFYIADGELVAALLVGNDQLNEVKLKNHLGADFFDVASEEEVANVVQAGFGSLGPVGLPENIKIIADRKVQDVRNAVVGANEDGYHLTGVNPGRDFTAEYVDIREVREGEISPDGQGVLNFARGIEIGHIFKLGTRYSASMGADVLDENGRAVPIIMGCYGIGVSRLLSAVMEQHARLFVNKTPKGEYRYAWGINFPKELAPFDVHLITVNVKDEEAQALTEKLEASLMGAGYEVLTDDRNERVGVKFSDSDLIGLPIRITVGKKAADGIVEVKIKATGDTIEVHADNVLETLEILSKK</sequence>
<organism>
    <name type="scientific">Streptococcus pneumoniae (strain ATCC 700669 / Spain 23F-1)</name>
    <dbReference type="NCBI Taxonomy" id="561276"/>
    <lineage>
        <taxon>Bacteria</taxon>
        <taxon>Bacillati</taxon>
        <taxon>Bacillota</taxon>
        <taxon>Bacilli</taxon>
        <taxon>Lactobacillales</taxon>
        <taxon>Streptococcaceae</taxon>
        <taxon>Streptococcus</taxon>
    </lineage>
</organism>
<comment type="function">
    <text evidence="1">Catalyzes the attachment of proline to tRNA(Pro) in a two-step reaction: proline is first activated by ATP to form Pro-AMP and then transferred to the acceptor end of tRNA(Pro). As ProRS can inadvertently accommodate and process non-cognate amino acids such as alanine and cysteine, to avoid such errors it has two additional distinct editing activities against alanine. One activity is designated as 'pretransfer' editing and involves the tRNA(Pro)-independent hydrolysis of activated Ala-AMP. The other activity is designated 'posttransfer' editing and involves deacylation of mischarged Ala-tRNA(Pro). The misacylated Cys-tRNA(Pro) is not edited by ProRS.</text>
</comment>
<comment type="catalytic activity">
    <reaction evidence="1">
        <text>tRNA(Pro) + L-proline + ATP = L-prolyl-tRNA(Pro) + AMP + diphosphate</text>
        <dbReference type="Rhea" id="RHEA:14305"/>
        <dbReference type="Rhea" id="RHEA-COMP:9700"/>
        <dbReference type="Rhea" id="RHEA-COMP:9702"/>
        <dbReference type="ChEBI" id="CHEBI:30616"/>
        <dbReference type="ChEBI" id="CHEBI:33019"/>
        <dbReference type="ChEBI" id="CHEBI:60039"/>
        <dbReference type="ChEBI" id="CHEBI:78442"/>
        <dbReference type="ChEBI" id="CHEBI:78532"/>
        <dbReference type="ChEBI" id="CHEBI:456215"/>
        <dbReference type="EC" id="6.1.1.15"/>
    </reaction>
</comment>
<comment type="subunit">
    <text evidence="1">Homodimer.</text>
</comment>
<comment type="subcellular location">
    <subcellularLocation>
        <location evidence="1">Cytoplasm</location>
    </subcellularLocation>
</comment>
<comment type="domain">
    <text evidence="1">Consists of three domains: the N-terminal catalytic domain, the editing domain and the C-terminal anticodon-binding domain.</text>
</comment>
<comment type="similarity">
    <text evidence="1">Belongs to the class-II aminoacyl-tRNA synthetase family. ProS type 1 subfamily.</text>
</comment>
<name>SYP_STRPJ</name>
<feature type="chain" id="PRO_1000185514" description="Proline--tRNA ligase">
    <location>
        <begin position="1"/>
        <end position="617"/>
    </location>
</feature>
<protein>
    <recommendedName>
        <fullName evidence="1">Proline--tRNA ligase</fullName>
        <ecNumber evidence="1">6.1.1.15</ecNumber>
    </recommendedName>
    <alternativeName>
        <fullName evidence="1">Prolyl-tRNA synthetase</fullName>
        <shortName evidence="1">ProRS</shortName>
    </alternativeName>
</protein>
<accession>B8ZKT3</accession>
<gene>
    <name evidence="1" type="primary">proS</name>
    <name type="ordered locus">SPN23F02520</name>
</gene>
<proteinExistence type="inferred from homology"/>
<keyword id="KW-0030">Aminoacyl-tRNA synthetase</keyword>
<keyword id="KW-0067">ATP-binding</keyword>
<keyword id="KW-0963">Cytoplasm</keyword>
<keyword id="KW-0436">Ligase</keyword>
<keyword id="KW-0547">Nucleotide-binding</keyword>
<keyword id="KW-0648">Protein biosynthesis</keyword>